<keyword id="KW-0025">Alternative splicing</keyword>
<keyword id="KW-0067">ATP-binding</keyword>
<keyword id="KW-1015">Disulfide bond</keyword>
<keyword id="KW-0418">Kinase</keyword>
<keyword id="KW-0496">Mitochondrion</keyword>
<keyword id="KW-0547">Nucleotide-binding</keyword>
<keyword id="KW-1185">Reference proteome</keyword>
<keyword id="KW-0808">Transferase</keyword>
<organism>
    <name type="scientific">Xenopus tropicalis</name>
    <name type="common">Western clawed frog</name>
    <name type="synonym">Silurana tropicalis</name>
    <dbReference type="NCBI Taxonomy" id="8364"/>
    <lineage>
        <taxon>Eukaryota</taxon>
        <taxon>Metazoa</taxon>
        <taxon>Chordata</taxon>
        <taxon>Craniata</taxon>
        <taxon>Vertebrata</taxon>
        <taxon>Euteleostomi</taxon>
        <taxon>Amphibia</taxon>
        <taxon>Batrachia</taxon>
        <taxon>Anura</taxon>
        <taxon>Pipoidea</taxon>
        <taxon>Pipidae</taxon>
        <taxon>Xenopodinae</taxon>
        <taxon>Xenopus</taxon>
        <taxon>Silurana</taxon>
    </lineage>
</organism>
<comment type="function">
    <text evidence="1">Catalyzes the reversible transfer of the terminal phosphate group between ATP and AMP. Plays an important role in cellular energy homeostasis and in adenine nucleotide metabolism. Adenylate kinase activity is critical for regulation of the phosphate utilization and the AMP de novo biosynthesis pathways. Plays a key role in hematopoiesis.</text>
</comment>
<comment type="catalytic activity">
    <reaction evidence="1">
        <text>AMP + ATP = 2 ADP</text>
        <dbReference type="Rhea" id="RHEA:12973"/>
        <dbReference type="ChEBI" id="CHEBI:30616"/>
        <dbReference type="ChEBI" id="CHEBI:456215"/>
        <dbReference type="ChEBI" id="CHEBI:456216"/>
        <dbReference type="EC" id="2.7.4.3"/>
    </reaction>
</comment>
<comment type="subunit">
    <text evidence="1">Monomer.</text>
</comment>
<comment type="subcellular location">
    <subcellularLocation>
        <location evidence="1">Mitochondrion intermembrane space</location>
    </subcellularLocation>
</comment>
<comment type="alternative products">
    <event type="alternative splicing"/>
    <isoform>
        <id>Q28F55-1</id>
        <name>1</name>
        <sequence type="displayed"/>
    </isoform>
    <isoform>
        <id>Q28F55-2</id>
        <name>2</name>
        <sequence type="described" ref="VSP_036506"/>
    </isoform>
</comment>
<comment type="domain">
    <text evidence="1">Consists of three domains, a large central CORE domain and two small peripheral domains, NMPbind and LID, which undergo movements during catalysis. The LID domain closes over the site of phosphoryl transfer upon ATP binding. Assembling and dissambling the active center during each catalytic cycle provides an effective means to prevent ATP hydrolysis.</text>
</comment>
<comment type="similarity">
    <text evidence="1">Belongs to the adenylate kinase family. AK2 subfamily.</text>
</comment>
<accession>Q28F55</accession>
<accession>Q6DK92</accession>
<name>KAD2_XENTR</name>
<gene>
    <name type="primary">ak2</name>
    <name type="ORF">TGas061b18.1</name>
</gene>
<proteinExistence type="evidence at transcript level"/>
<dbReference type="EC" id="2.7.4.3" evidence="1"/>
<dbReference type="EMBL" id="CR762157">
    <property type="protein sequence ID" value="CAJ81568.1"/>
    <property type="molecule type" value="mRNA"/>
</dbReference>
<dbReference type="EMBL" id="BC074526">
    <property type="protein sequence ID" value="AAH74526.1"/>
    <property type="molecule type" value="mRNA"/>
</dbReference>
<dbReference type="RefSeq" id="NP_001004791.1">
    <molecule id="Q28F55-2"/>
    <property type="nucleotide sequence ID" value="NM_001004791.1"/>
</dbReference>
<dbReference type="RefSeq" id="XP_012812152.1">
    <molecule id="Q28F55-1"/>
    <property type="nucleotide sequence ID" value="XM_012956698.3"/>
</dbReference>
<dbReference type="SMR" id="Q28F55"/>
<dbReference type="FunCoup" id="Q28F55">
    <property type="interactions" value="1902"/>
</dbReference>
<dbReference type="STRING" id="8364.ENSXETP00000026948"/>
<dbReference type="PaxDb" id="8364-ENSXETP00000057918"/>
<dbReference type="DNASU" id="448011"/>
<dbReference type="GeneID" id="448011"/>
<dbReference type="KEGG" id="xtr:448011"/>
<dbReference type="AGR" id="Xenbase:XB-GENE-491598"/>
<dbReference type="CTD" id="204"/>
<dbReference type="Xenbase" id="XB-GENE-491598">
    <property type="gene designation" value="ak2"/>
</dbReference>
<dbReference type="eggNOG" id="KOG3078">
    <property type="taxonomic scope" value="Eukaryota"/>
</dbReference>
<dbReference type="HOGENOM" id="CLU_032354_1_2_1"/>
<dbReference type="InParanoid" id="Q28F55"/>
<dbReference type="OMA" id="VYHEQTA"/>
<dbReference type="OrthoDB" id="439792at2759"/>
<dbReference type="PhylomeDB" id="Q28F55"/>
<dbReference type="TreeFam" id="TF300896"/>
<dbReference type="Reactome" id="R-XTR-499943">
    <property type="pathway name" value="Interconversion of nucleotide di- and triphosphates"/>
</dbReference>
<dbReference type="Proteomes" id="UP000008143">
    <property type="component" value="Chromosome 2"/>
</dbReference>
<dbReference type="GO" id="GO:0005758">
    <property type="term" value="C:mitochondrial intermembrane space"/>
    <property type="evidence" value="ECO:0007669"/>
    <property type="project" value="UniProtKB-SubCell"/>
</dbReference>
<dbReference type="GO" id="GO:0004017">
    <property type="term" value="F:adenylate kinase activity"/>
    <property type="evidence" value="ECO:0007669"/>
    <property type="project" value="UniProtKB-UniRule"/>
</dbReference>
<dbReference type="GO" id="GO:0005524">
    <property type="term" value="F:ATP binding"/>
    <property type="evidence" value="ECO:0007669"/>
    <property type="project" value="UniProtKB-KW"/>
</dbReference>
<dbReference type="GO" id="GO:0006172">
    <property type="term" value="P:ADP biosynthetic process"/>
    <property type="evidence" value="ECO:0007669"/>
    <property type="project" value="UniProtKB-UniRule"/>
</dbReference>
<dbReference type="GO" id="GO:0046033">
    <property type="term" value="P:AMP metabolic process"/>
    <property type="evidence" value="ECO:0007669"/>
    <property type="project" value="UniProtKB-UniRule"/>
</dbReference>
<dbReference type="GO" id="GO:0046034">
    <property type="term" value="P:ATP metabolic process"/>
    <property type="evidence" value="ECO:0007669"/>
    <property type="project" value="UniProtKB-UniRule"/>
</dbReference>
<dbReference type="CDD" id="cd01428">
    <property type="entry name" value="ADK"/>
    <property type="match status" value="1"/>
</dbReference>
<dbReference type="FunFam" id="3.40.50.300:FF:000106">
    <property type="entry name" value="Adenylate kinase mitochondrial"/>
    <property type="match status" value="1"/>
</dbReference>
<dbReference type="Gene3D" id="3.40.50.300">
    <property type="entry name" value="P-loop containing nucleotide triphosphate hydrolases"/>
    <property type="match status" value="1"/>
</dbReference>
<dbReference type="HAMAP" id="MF_00235">
    <property type="entry name" value="Adenylate_kinase_Adk"/>
    <property type="match status" value="1"/>
</dbReference>
<dbReference type="HAMAP" id="MF_03168">
    <property type="entry name" value="Adenylate_kinase_AK2"/>
    <property type="match status" value="1"/>
</dbReference>
<dbReference type="InterPro" id="IPR006259">
    <property type="entry name" value="Adenyl_kin_sub"/>
</dbReference>
<dbReference type="InterPro" id="IPR000850">
    <property type="entry name" value="Adenylat/UMP-CMP_kin"/>
</dbReference>
<dbReference type="InterPro" id="IPR033690">
    <property type="entry name" value="Adenylat_kinase_CS"/>
</dbReference>
<dbReference type="InterPro" id="IPR007862">
    <property type="entry name" value="Adenylate_kinase_lid-dom"/>
</dbReference>
<dbReference type="InterPro" id="IPR028587">
    <property type="entry name" value="AK2"/>
</dbReference>
<dbReference type="InterPro" id="IPR027417">
    <property type="entry name" value="P-loop_NTPase"/>
</dbReference>
<dbReference type="NCBIfam" id="TIGR01351">
    <property type="entry name" value="adk"/>
    <property type="match status" value="1"/>
</dbReference>
<dbReference type="NCBIfam" id="NF001380">
    <property type="entry name" value="PRK00279.1-2"/>
    <property type="match status" value="1"/>
</dbReference>
<dbReference type="NCBIfam" id="NF001381">
    <property type="entry name" value="PRK00279.1-3"/>
    <property type="match status" value="1"/>
</dbReference>
<dbReference type="NCBIfam" id="NF011100">
    <property type="entry name" value="PRK14527.1"/>
    <property type="match status" value="1"/>
</dbReference>
<dbReference type="PANTHER" id="PTHR23359">
    <property type="entry name" value="NUCLEOTIDE KINASE"/>
    <property type="match status" value="1"/>
</dbReference>
<dbReference type="Pfam" id="PF00406">
    <property type="entry name" value="ADK"/>
    <property type="match status" value="1"/>
</dbReference>
<dbReference type="Pfam" id="PF05191">
    <property type="entry name" value="ADK_lid"/>
    <property type="match status" value="1"/>
</dbReference>
<dbReference type="PRINTS" id="PR00094">
    <property type="entry name" value="ADENYLTKNASE"/>
</dbReference>
<dbReference type="SUPFAM" id="SSF52540">
    <property type="entry name" value="P-loop containing nucleoside triphosphate hydrolases"/>
    <property type="match status" value="1"/>
</dbReference>
<dbReference type="PROSITE" id="PS00113">
    <property type="entry name" value="ADENYLATE_KINASE"/>
    <property type="match status" value="1"/>
</dbReference>
<protein>
    <recommendedName>
        <fullName evidence="1">Adenylate kinase 2, mitochondrial</fullName>
        <shortName evidence="1">AK 2</shortName>
        <ecNumber evidence="1">2.7.4.3</ecNumber>
    </recommendedName>
    <alternativeName>
        <fullName evidence="1">ATP-AMP transphosphorylase 2</fullName>
    </alternativeName>
    <alternativeName>
        <fullName evidence="1">ATP:AMP phosphotransferase</fullName>
    </alternativeName>
    <alternativeName>
        <fullName evidence="1">Adenylate monophosphate kinase</fullName>
    </alternativeName>
</protein>
<reference key="1">
    <citation type="submission" date="2006-10" db="EMBL/GenBank/DDBJ databases">
        <authorList>
            <consortium name="Sanger Xenopus tropicalis EST/cDNA project"/>
        </authorList>
    </citation>
    <scope>NUCLEOTIDE SEQUENCE [LARGE SCALE MRNA] (ISOFORM 1)</scope>
    <source>
        <tissue>Gastrula</tissue>
    </source>
</reference>
<reference key="2">
    <citation type="submission" date="2004-06" db="EMBL/GenBank/DDBJ databases">
        <authorList>
            <consortium name="NIH - Xenopus Gene Collection (XGC) project"/>
        </authorList>
    </citation>
    <scope>NUCLEOTIDE SEQUENCE [LARGE SCALE MRNA] (ISOFORM 2)</scope>
    <source>
        <tissue>Embryo</tissue>
    </source>
</reference>
<sequence length="241" mass="26563">MAPREAAPAERGSVMEGIRAILLGPPGAGKGTQAPKLAEKYCVCHLATGDMLRAMVASGSELGMRLKATMDAGKLVSDEMVVELIEKNLDTPPCKKGFLLDGFPRTVKQAEMLDELLEKRQEKLDSVIEFKVDDSLLVRRICGRLIHASSGRSYHEEFNPPKEAMKDDVTGEPLMRRSDDNETTLKSRLEAYHTMTSPLVEYYQRHGIHTAVDAAQSPDVVFASILAAFSKARCKDLVLFV</sequence>
<evidence type="ECO:0000255" key="1">
    <source>
        <dbReference type="HAMAP-Rule" id="MF_03168"/>
    </source>
</evidence>
<evidence type="ECO:0000256" key="2">
    <source>
        <dbReference type="SAM" id="MobiDB-lite"/>
    </source>
</evidence>
<evidence type="ECO:0000303" key="3">
    <source ref="2"/>
</evidence>
<feature type="chain" id="PRO_0000365698" description="Adenylate kinase 2, mitochondrial">
    <location>
        <begin position="1"/>
        <end position="241"/>
    </location>
</feature>
<feature type="region of interest" description="NMP" evidence="1">
    <location>
        <begin position="47"/>
        <end position="76"/>
    </location>
</feature>
<feature type="region of interest" description="LID" evidence="1">
    <location>
        <begin position="143"/>
        <end position="180"/>
    </location>
</feature>
<feature type="region of interest" description="Disordered" evidence="2">
    <location>
        <begin position="156"/>
        <end position="181"/>
    </location>
</feature>
<feature type="binding site" evidence="1">
    <location>
        <begin position="27"/>
        <end position="32"/>
    </location>
    <ligand>
        <name>ATP</name>
        <dbReference type="ChEBI" id="CHEBI:30616"/>
    </ligand>
</feature>
<feature type="binding site" evidence="1">
    <location>
        <position position="48"/>
    </location>
    <ligand>
        <name>AMP</name>
        <dbReference type="ChEBI" id="CHEBI:456215"/>
    </ligand>
</feature>
<feature type="binding site" evidence="1">
    <location>
        <position position="53"/>
    </location>
    <ligand>
        <name>AMP</name>
        <dbReference type="ChEBI" id="CHEBI:456215"/>
    </ligand>
</feature>
<feature type="binding site" evidence="1">
    <location>
        <begin position="74"/>
        <end position="76"/>
    </location>
    <ligand>
        <name>AMP</name>
        <dbReference type="ChEBI" id="CHEBI:456215"/>
    </ligand>
</feature>
<feature type="binding site" evidence="1">
    <location>
        <begin position="102"/>
        <end position="105"/>
    </location>
    <ligand>
        <name>AMP</name>
        <dbReference type="ChEBI" id="CHEBI:456215"/>
    </ligand>
</feature>
<feature type="binding site" evidence="1">
    <location>
        <position position="109"/>
    </location>
    <ligand>
        <name>AMP</name>
        <dbReference type="ChEBI" id="CHEBI:456215"/>
    </ligand>
</feature>
<feature type="binding site" evidence="1">
    <location>
        <position position="144"/>
    </location>
    <ligand>
        <name>ATP</name>
        <dbReference type="ChEBI" id="CHEBI:30616"/>
    </ligand>
</feature>
<feature type="binding site" evidence="1">
    <location>
        <begin position="153"/>
        <end position="154"/>
    </location>
    <ligand>
        <name>ATP</name>
        <dbReference type="ChEBI" id="CHEBI:30616"/>
    </ligand>
</feature>
<feature type="binding site" evidence="1">
    <location>
        <position position="177"/>
    </location>
    <ligand>
        <name>AMP</name>
        <dbReference type="ChEBI" id="CHEBI:456215"/>
    </ligand>
</feature>
<feature type="binding site" evidence="1">
    <location>
        <position position="188"/>
    </location>
    <ligand>
        <name>AMP</name>
        <dbReference type="ChEBI" id="CHEBI:456215"/>
    </ligand>
</feature>
<feature type="binding site" evidence="1">
    <location>
        <position position="216"/>
    </location>
    <ligand>
        <name>ATP</name>
        <dbReference type="ChEBI" id="CHEBI:30616"/>
    </ligand>
</feature>
<feature type="disulfide bond" evidence="1">
    <location>
        <begin position="44"/>
        <end position="94"/>
    </location>
</feature>
<feature type="splice variant" id="VSP_036506" description="In isoform 2." evidence="3">
    <original>CKDLVLFV</original>
    <variation>SH</variation>
    <location>
        <begin position="234"/>
        <end position="241"/>
    </location>
</feature>